<organism>
    <name type="scientific">Buchnera aphidicola subsp. Acyrthosiphon pisum (strain APS)</name>
    <name type="common">Acyrthosiphon pisum symbiotic bacterium</name>
    <dbReference type="NCBI Taxonomy" id="107806"/>
    <lineage>
        <taxon>Bacteria</taxon>
        <taxon>Pseudomonadati</taxon>
        <taxon>Pseudomonadota</taxon>
        <taxon>Gammaproteobacteria</taxon>
        <taxon>Enterobacterales</taxon>
        <taxon>Erwiniaceae</taxon>
        <taxon>Buchnera</taxon>
    </lineage>
</organism>
<sequence>MNKKTRIAITGPIGRMGRMLIKEIQNNKHSHLTVAVVQKKHQLIGQDIGRIIGIGEIGVLISDELNIKKNDFDVLIDFTRPAGTLEYLKYCNKFKKNIVIGTTGFSKEEIDIIKSYSQKIAIIIASNFSIGINLLFQLIKKTTQIIGKDSDINILEYHHRNKIDAPSGTALEIGEVISKVMNWNLNQDSIYYQKGITGIRDAKKIGFSIVRAGNIVGKHTVMFSSYDEEIKITHTASNRMSFARGAIQSALWIHKKNTGLFDMTDVLSL</sequence>
<protein>
    <recommendedName>
        <fullName evidence="1">4-hydroxy-tetrahydrodipicolinate reductase</fullName>
        <shortName evidence="1">HTPA reductase</shortName>
        <ecNumber evidence="1">1.17.1.8</ecNumber>
    </recommendedName>
</protein>
<evidence type="ECO:0000255" key="1">
    <source>
        <dbReference type="HAMAP-Rule" id="MF_00102"/>
    </source>
</evidence>
<evidence type="ECO:0000305" key="2"/>
<keyword id="KW-0028">Amino-acid biosynthesis</keyword>
<keyword id="KW-0963">Cytoplasm</keyword>
<keyword id="KW-0220">Diaminopimelate biosynthesis</keyword>
<keyword id="KW-0457">Lysine biosynthesis</keyword>
<keyword id="KW-0520">NAD</keyword>
<keyword id="KW-0521">NADP</keyword>
<keyword id="KW-0560">Oxidoreductase</keyword>
<keyword id="KW-1185">Reference proteome</keyword>
<dbReference type="EC" id="1.17.1.8" evidence="1"/>
<dbReference type="EMBL" id="BA000003">
    <property type="protein sequence ID" value="BAB12864.1"/>
    <property type="molecule type" value="Genomic_DNA"/>
</dbReference>
<dbReference type="RefSeq" id="NP_239978.1">
    <property type="nucleotide sequence ID" value="NC_002528.1"/>
</dbReference>
<dbReference type="RefSeq" id="WP_010895972.1">
    <property type="nucleotide sequence ID" value="NC_002528.1"/>
</dbReference>
<dbReference type="SMR" id="P57246"/>
<dbReference type="STRING" id="563178.BUAP5A_144"/>
<dbReference type="EnsemblBacteria" id="BAB12864">
    <property type="protein sequence ID" value="BAB12864"/>
    <property type="gene ID" value="BAB12864"/>
</dbReference>
<dbReference type="KEGG" id="buc:BU146"/>
<dbReference type="PATRIC" id="fig|107806.10.peg.155"/>
<dbReference type="eggNOG" id="COG0289">
    <property type="taxonomic scope" value="Bacteria"/>
</dbReference>
<dbReference type="HOGENOM" id="CLU_047479_2_1_6"/>
<dbReference type="UniPathway" id="UPA00034">
    <property type="reaction ID" value="UER00018"/>
</dbReference>
<dbReference type="Proteomes" id="UP000001806">
    <property type="component" value="Chromosome"/>
</dbReference>
<dbReference type="GO" id="GO:0005829">
    <property type="term" value="C:cytosol"/>
    <property type="evidence" value="ECO:0007669"/>
    <property type="project" value="TreeGrafter"/>
</dbReference>
<dbReference type="GO" id="GO:0008839">
    <property type="term" value="F:4-hydroxy-tetrahydrodipicolinate reductase"/>
    <property type="evidence" value="ECO:0007669"/>
    <property type="project" value="UniProtKB-EC"/>
</dbReference>
<dbReference type="GO" id="GO:0051287">
    <property type="term" value="F:NAD binding"/>
    <property type="evidence" value="ECO:0007669"/>
    <property type="project" value="UniProtKB-UniRule"/>
</dbReference>
<dbReference type="GO" id="GO:0050661">
    <property type="term" value="F:NADP binding"/>
    <property type="evidence" value="ECO:0007669"/>
    <property type="project" value="UniProtKB-UniRule"/>
</dbReference>
<dbReference type="GO" id="GO:0016726">
    <property type="term" value="F:oxidoreductase activity, acting on CH or CH2 groups, NAD or NADP as acceptor"/>
    <property type="evidence" value="ECO:0007669"/>
    <property type="project" value="UniProtKB-UniRule"/>
</dbReference>
<dbReference type="GO" id="GO:0019877">
    <property type="term" value="P:diaminopimelate biosynthetic process"/>
    <property type="evidence" value="ECO:0007669"/>
    <property type="project" value="UniProtKB-UniRule"/>
</dbReference>
<dbReference type="GO" id="GO:0009089">
    <property type="term" value="P:lysine biosynthetic process via diaminopimelate"/>
    <property type="evidence" value="ECO:0007669"/>
    <property type="project" value="UniProtKB-UniRule"/>
</dbReference>
<dbReference type="CDD" id="cd02274">
    <property type="entry name" value="DHDPR_N"/>
    <property type="match status" value="1"/>
</dbReference>
<dbReference type="FunFam" id="3.30.360.10:FF:000004">
    <property type="entry name" value="4-hydroxy-tetrahydrodipicolinate reductase"/>
    <property type="match status" value="1"/>
</dbReference>
<dbReference type="Gene3D" id="3.30.360.10">
    <property type="entry name" value="Dihydrodipicolinate Reductase, domain 2"/>
    <property type="match status" value="1"/>
</dbReference>
<dbReference type="Gene3D" id="3.40.50.720">
    <property type="entry name" value="NAD(P)-binding Rossmann-like Domain"/>
    <property type="match status" value="1"/>
</dbReference>
<dbReference type="HAMAP" id="MF_00102">
    <property type="entry name" value="DapB"/>
    <property type="match status" value="1"/>
</dbReference>
<dbReference type="InterPro" id="IPR022663">
    <property type="entry name" value="DapB_C"/>
</dbReference>
<dbReference type="InterPro" id="IPR000846">
    <property type="entry name" value="DapB_N"/>
</dbReference>
<dbReference type="InterPro" id="IPR022664">
    <property type="entry name" value="DapB_N_CS"/>
</dbReference>
<dbReference type="InterPro" id="IPR023940">
    <property type="entry name" value="DHDPR_bac"/>
</dbReference>
<dbReference type="InterPro" id="IPR036291">
    <property type="entry name" value="NAD(P)-bd_dom_sf"/>
</dbReference>
<dbReference type="NCBIfam" id="TIGR00036">
    <property type="entry name" value="dapB"/>
    <property type="match status" value="1"/>
</dbReference>
<dbReference type="PANTHER" id="PTHR20836:SF0">
    <property type="entry name" value="4-HYDROXY-TETRAHYDRODIPICOLINATE REDUCTASE 1, CHLOROPLASTIC-RELATED"/>
    <property type="match status" value="1"/>
</dbReference>
<dbReference type="PANTHER" id="PTHR20836">
    <property type="entry name" value="DIHYDRODIPICOLINATE REDUCTASE"/>
    <property type="match status" value="1"/>
</dbReference>
<dbReference type="Pfam" id="PF05173">
    <property type="entry name" value="DapB_C"/>
    <property type="match status" value="1"/>
</dbReference>
<dbReference type="Pfam" id="PF01113">
    <property type="entry name" value="DapB_N"/>
    <property type="match status" value="1"/>
</dbReference>
<dbReference type="PIRSF" id="PIRSF000161">
    <property type="entry name" value="DHPR"/>
    <property type="match status" value="1"/>
</dbReference>
<dbReference type="SUPFAM" id="SSF55347">
    <property type="entry name" value="Glyceraldehyde-3-phosphate dehydrogenase-like, C-terminal domain"/>
    <property type="match status" value="1"/>
</dbReference>
<dbReference type="SUPFAM" id="SSF51735">
    <property type="entry name" value="NAD(P)-binding Rossmann-fold domains"/>
    <property type="match status" value="1"/>
</dbReference>
<dbReference type="PROSITE" id="PS01298">
    <property type="entry name" value="DAPB"/>
    <property type="match status" value="1"/>
</dbReference>
<gene>
    <name evidence="1" type="primary">dapB</name>
    <name type="ordered locus">BU146</name>
</gene>
<proteinExistence type="inferred from homology"/>
<feature type="chain" id="PRO_0000141419" description="4-hydroxy-tetrahydrodipicolinate reductase">
    <location>
        <begin position="1"/>
        <end position="269"/>
    </location>
</feature>
<feature type="active site" description="Proton donor/acceptor" evidence="1">
    <location>
        <position position="158"/>
    </location>
</feature>
<feature type="active site" description="Proton donor" evidence="1">
    <location>
        <position position="162"/>
    </location>
</feature>
<feature type="binding site" evidence="1">
    <location>
        <begin position="11"/>
        <end position="16"/>
    </location>
    <ligand>
        <name>NAD(+)</name>
        <dbReference type="ChEBI" id="CHEBI:57540"/>
    </ligand>
</feature>
<feature type="binding site" evidence="1">
    <location>
        <position position="39"/>
    </location>
    <ligand>
        <name>NADP(+)</name>
        <dbReference type="ChEBI" id="CHEBI:58349"/>
    </ligand>
</feature>
<feature type="binding site" evidence="1">
    <location>
        <begin position="101"/>
        <end position="103"/>
    </location>
    <ligand>
        <name>NAD(+)</name>
        <dbReference type="ChEBI" id="CHEBI:57540"/>
    </ligand>
</feature>
<feature type="binding site" evidence="1">
    <location>
        <begin position="125"/>
        <end position="128"/>
    </location>
    <ligand>
        <name>NAD(+)</name>
        <dbReference type="ChEBI" id="CHEBI:57540"/>
    </ligand>
</feature>
<feature type="binding site" evidence="1">
    <location>
        <position position="159"/>
    </location>
    <ligand>
        <name>(S)-2,3,4,5-tetrahydrodipicolinate</name>
        <dbReference type="ChEBI" id="CHEBI:16845"/>
    </ligand>
</feature>
<feature type="binding site" evidence="1">
    <location>
        <begin position="168"/>
        <end position="169"/>
    </location>
    <ligand>
        <name>(S)-2,3,4,5-tetrahydrodipicolinate</name>
        <dbReference type="ChEBI" id="CHEBI:16845"/>
    </ligand>
</feature>
<reference key="1">
    <citation type="journal article" date="2000" name="Nature">
        <title>Genome sequence of the endocellular bacterial symbiont of aphids Buchnera sp. APS.</title>
        <authorList>
            <person name="Shigenobu S."/>
            <person name="Watanabe H."/>
            <person name="Hattori M."/>
            <person name="Sakaki Y."/>
            <person name="Ishikawa H."/>
        </authorList>
    </citation>
    <scope>NUCLEOTIDE SEQUENCE [LARGE SCALE GENOMIC DNA]</scope>
    <source>
        <strain>APS</strain>
    </source>
</reference>
<accession>P57246</accession>
<name>DAPB_BUCAI</name>
<comment type="function">
    <text evidence="1">Catalyzes the conversion of 4-hydroxy-tetrahydrodipicolinate (HTPA) to tetrahydrodipicolinate.</text>
</comment>
<comment type="catalytic activity">
    <reaction evidence="1">
        <text>(S)-2,3,4,5-tetrahydrodipicolinate + NAD(+) + H2O = (2S,4S)-4-hydroxy-2,3,4,5-tetrahydrodipicolinate + NADH + H(+)</text>
        <dbReference type="Rhea" id="RHEA:35323"/>
        <dbReference type="ChEBI" id="CHEBI:15377"/>
        <dbReference type="ChEBI" id="CHEBI:15378"/>
        <dbReference type="ChEBI" id="CHEBI:16845"/>
        <dbReference type="ChEBI" id="CHEBI:57540"/>
        <dbReference type="ChEBI" id="CHEBI:57945"/>
        <dbReference type="ChEBI" id="CHEBI:67139"/>
        <dbReference type="EC" id="1.17.1.8"/>
    </reaction>
</comment>
<comment type="catalytic activity">
    <reaction evidence="1">
        <text>(S)-2,3,4,5-tetrahydrodipicolinate + NADP(+) + H2O = (2S,4S)-4-hydroxy-2,3,4,5-tetrahydrodipicolinate + NADPH + H(+)</text>
        <dbReference type="Rhea" id="RHEA:35331"/>
        <dbReference type="ChEBI" id="CHEBI:15377"/>
        <dbReference type="ChEBI" id="CHEBI:15378"/>
        <dbReference type="ChEBI" id="CHEBI:16845"/>
        <dbReference type="ChEBI" id="CHEBI:57783"/>
        <dbReference type="ChEBI" id="CHEBI:58349"/>
        <dbReference type="ChEBI" id="CHEBI:67139"/>
        <dbReference type="EC" id="1.17.1.8"/>
    </reaction>
</comment>
<comment type="pathway">
    <text evidence="1">Amino-acid biosynthesis; L-lysine biosynthesis via DAP pathway; (S)-tetrahydrodipicolinate from L-aspartate: step 4/4.</text>
</comment>
<comment type="subunit">
    <text evidence="1">Homotetramer.</text>
</comment>
<comment type="subcellular location">
    <subcellularLocation>
        <location evidence="1">Cytoplasm</location>
    </subcellularLocation>
</comment>
<comment type="similarity">
    <text evidence="1">Belongs to the DapB family.</text>
</comment>
<comment type="caution">
    <text evidence="2">Was originally thought to be a dihydrodipicolinate reductase (DHDPR), catalyzing the conversion of dihydrodipicolinate to tetrahydrodipicolinate. However, it was shown in E.coli that the substrate of the enzymatic reaction is not dihydrodipicolinate (DHDP) but in fact (2S,4S)-4-hydroxy-2,3,4,5-tetrahydrodipicolinic acid (HTPA), the product released by the DapA-catalyzed reaction.</text>
</comment>